<protein>
    <recommendedName>
        <fullName evidence="4">Uncharacterized skeletal organic matrix protein 8</fullName>
        <shortName>Uncharacterized SOMP-8</shortName>
    </recommendedName>
</protein>
<sequence>MVTPHGILLLTITAAASLLWITFAEITIPNDAKSFENFLKEHGPGKPGPLGYFNSIYMAFTREEAENFPNLVSVHTRMKRIKTQNSTIPDKYVILGIQAPNDTQEQNSTRNKRDSESYTATTQSGTCSTTIGGLQRLCEVCPARTDLGPDITPRFINEVLCDVPGLDCGVGQVGGKCRSASVFQDFLRFSSSDSNLEVYSQEIRVCCECALALS</sequence>
<name>USOM8_ACRMI</name>
<dbReference type="EMBL" id="JT014391">
    <property type="status" value="NOT_ANNOTATED_CDS"/>
    <property type="molecule type" value="mRNA"/>
</dbReference>
<dbReference type="OrthoDB" id="5981860at2759"/>
<dbReference type="GO" id="GO:0005576">
    <property type="term" value="C:extracellular region"/>
    <property type="evidence" value="ECO:0007669"/>
    <property type="project" value="UniProtKB-SubCell"/>
</dbReference>
<dbReference type="InterPro" id="IPR029034">
    <property type="entry name" value="Cystine-knot_cytokine"/>
</dbReference>
<dbReference type="SUPFAM" id="SSF57501">
    <property type="entry name" value="Cystine-knot cytokines"/>
    <property type="match status" value="1"/>
</dbReference>
<reference evidence="5" key="1">
    <citation type="journal article" date="2012" name="Mol. Ecol.">
        <title>Whole transcriptome analysis of the coral Acropora millepora reveals complex responses to CO(2)-driven acidification during the initiation of calcification.</title>
        <authorList>
            <person name="Moya A."/>
            <person name="Huisman L."/>
            <person name="Ball E.E."/>
            <person name="Hayward D.C."/>
            <person name="Grasso L.C."/>
            <person name="Chua C.M."/>
            <person name="Woo H.N."/>
            <person name="Gattuso J.P."/>
            <person name="Foret S."/>
            <person name="Miller D.J."/>
        </authorList>
    </citation>
    <scope>NUCLEOTIDE SEQUENCE [MRNA]</scope>
</reference>
<reference evidence="5" key="2">
    <citation type="journal article" date="2013" name="Mol. Biol. Evol.">
        <title>The skeletal proteome of the coral Acropora millepora: the evolution of calcification by co-option and domain shuffling.</title>
        <authorList>
            <person name="Ramos-Silva P."/>
            <person name="Kaandorp J."/>
            <person name="Huisman L."/>
            <person name="Marie B."/>
            <person name="Zanella-Cleon I."/>
            <person name="Guichard N."/>
            <person name="Miller D.J."/>
            <person name="Marin F."/>
        </authorList>
    </citation>
    <scope>PROTEIN SEQUENCE OF 33-41 AND 113-205</scope>
    <scope>TISSUE SPECIFICITY</scope>
    <scope>IDENTIFICATION BY MASS SPECTROMETRY</scope>
</reference>
<proteinExistence type="evidence at protein level"/>
<keyword id="KW-0903">Direct protein sequencing</keyword>
<keyword id="KW-0964">Secreted</keyword>
<keyword id="KW-0732">Signal</keyword>
<evidence type="ECO:0000255" key="1"/>
<evidence type="ECO:0000256" key="2">
    <source>
        <dbReference type="SAM" id="MobiDB-lite"/>
    </source>
</evidence>
<evidence type="ECO:0000269" key="3">
    <source>
    </source>
</evidence>
<evidence type="ECO:0000303" key="4">
    <source>
    </source>
</evidence>
<evidence type="ECO:0000305" key="5"/>
<evidence type="ECO:0000305" key="6">
    <source>
    </source>
</evidence>
<organism>
    <name type="scientific">Acropora millepora</name>
    <name type="common">Staghorn coral</name>
    <name type="synonym">Heteropora millepora</name>
    <dbReference type="NCBI Taxonomy" id="45264"/>
    <lineage>
        <taxon>Eukaryota</taxon>
        <taxon>Metazoa</taxon>
        <taxon>Cnidaria</taxon>
        <taxon>Anthozoa</taxon>
        <taxon>Hexacorallia</taxon>
        <taxon>Scleractinia</taxon>
        <taxon>Astrocoeniina</taxon>
        <taxon>Acroporidae</taxon>
        <taxon>Acropora</taxon>
    </lineage>
</organism>
<accession>B3EWZ2</accession>
<comment type="subcellular location">
    <subcellularLocation>
        <location evidence="6">Secreted</location>
    </subcellularLocation>
</comment>
<comment type="tissue specificity">
    <text evidence="3">Component of the acid-insoluble and acid-soluble organic matrix of the aragonitic skeleton (at protein level).</text>
</comment>
<feature type="signal peptide" evidence="1">
    <location>
        <begin position="1"/>
        <end position="24"/>
    </location>
</feature>
<feature type="chain" id="PRO_0000429762" description="Uncharacterized skeletal organic matrix protein 8" evidence="1">
    <location>
        <begin position="25"/>
        <end position="214"/>
    </location>
</feature>
<feature type="region of interest" description="Disordered" evidence="2">
    <location>
        <begin position="99"/>
        <end position="121"/>
    </location>
</feature>
<feature type="compositionally biased region" description="Polar residues" evidence="2">
    <location>
        <begin position="100"/>
        <end position="109"/>
    </location>
</feature>